<feature type="chain" id="PRO_0000407652" description="Methionine aminopeptidase 2">
    <location>
        <begin position="1"/>
        <end position="418"/>
    </location>
</feature>
<feature type="region of interest" description="Disordered" evidence="2">
    <location>
        <begin position="18"/>
        <end position="49"/>
    </location>
</feature>
<feature type="compositionally biased region" description="Basic residues" evidence="2">
    <location>
        <begin position="38"/>
        <end position="49"/>
    </location>
</feature>
<feature type="binding site" evidence="1">
    <location>
        <position position="172"/>
    </location>
    <ligand>
        <name>substrate</name>
    </ligand>
</feature>
<feature type="binding site" evidence="1">
    <location>
        <position position="192"/>
    </location>
    <ligand>
        <name>a divalent metal cation</name>
        <dbReference type="ChEBI" id="CHEBI:60240"/>
        <label>1</label>
    </ligand>
</feature>
<feature type="binding site" evidence="1">
    <location>
        <position position="203"/>
    </location>
    <ligand>
        <name>a divalent metal cation</name>
        <dbReference type="ChEBI" id="CHEBI:60240"/>
        <label>1</label>
    </ligand>
</feature>
<feature type="binding site" evidence="1">
    <location>
        <position position="203"/>
    </location>
    <ligand>
        <name>a divalent metal cation</name>
        <dbReference type="ChEBI" id="CHEBI:60240"/>
        <label>2</label>
        <note>catalytic</note>
    </ligand>
</feature>
<feature type="binding site" evidence="1">
    <location>
        <position position="272"/>
    </location>
    <ligand>
        <name>a divalent metal cation</name>
        <dbReference type="ChEBI" id="CHEBI:60240"/>
        <label>2</label>
        <note>catalytic</note>
    </ligand>
</feature>
<feature type="binding site" evidence="1">
    <location>
        <position position="280"/>
    </location>
    <ligand>
        <name>substrate</name>
    </ligand>
</feature>
<feature type="binding site" evidence="1">
    <location>
        <position position="305"/>
    </location>
    <ligand>
        <name>a divalent metal cation</name>
        <dbReference type="ChEBI" id="CHEBI:60240"/>
        <label>2</label>
        <note>catalytic</note>
    </ligand>
</feature>
<feature type="binding site" evidence="1">
    <location>
        <position position="399"/>
    </location>
    <ligand>
        <name>a divalent metal cation</name>
        <dbReference type="ChEBI" id="CHEBI:60240"/>
        <label>1</label>
    </ligand>
</feature>
<feature type="binding site" evidence="1">
    <location>
        <position position="399"/>
    </location>
    <ligand>
        <name>a divalent metal cation</name>
        <dbReference type="ChEBI" id="CHEBI:60240"/>
        <label>2</label>
        <note>catalytic</note>
    </ligand>
</feature>
<dbReference type="EC" id="3.4.11.18" evidence="1"/>
<dbReference type="EMBL" id="CR382125">
    <property type="protein sequence ID" value="CAG99346.1"/>
    <property type="molecule type" value="Genomic_DNA"/>
</dbReference>
<dbReference type="RefSeq" id="XP_454259.1">
    <property type="nucleotide sequence ID" value="XM_454259.1"/>
</dbReference>
<dbReference type="SMR" id="Q6CP80"/>
<dbReference type="FunCoup" id="Q6CP80">
    <property type="interactions" value="1231"/>
</dbReference>
<dbReference type="STRING" id="284590.Q6CP80"/>
<dbReference type="MEROPS" id="M24.002"/>
<dbReference type="PaxDb" id="284590-Q6CP80"/>
<dbReference type="KEGG" id="kla:KLLA0_E06887g"/>
<dbReference type="eggNOG" id="KOG2775">
    <property type="taxonomic scope" value="Eukaryota"/>
</dbReference>
<dbReference type="HOGENOM" id="CLU_015857_7_1_1"/>
<dbReference type="InParanoid" id="Q6CP80"/>
<dbReference type="OMA" id="PFAKRWL"/>
<dbReference type="Proteomes" id="UP000000598">
    <property type="component" value="Chromosome E"/>
</dbReference>
<dbReference type="GO" id="GO:0005737">
    <property type="term" value="C:cytoplasm"/>
    <property type="evidence" value="ECO:0007669"/>
    <property type="project" value="UniProtKB-SubCell"/>
</dbReference>
<dbReference type="GO" id="GO:0004239">
    <property type="term" value="F:initiator methionyl aminopeptidase activity"/>
    <property type="evidence" value="ECO:0007669"/>
    <property type="project" value="UniProtKB-UniRule"/>
</dbReference>
<dbReference type="GO" id="GO:0046872">
    <property type="term" value="F:metal ion binding"/>
    <property type="evidence" value="ECO:0007669"/>
    <property type="project" value="UniProtKB-UniRule"/>
</dbReference>
<dbReference type="GO" id="GO:0070006">
    <property type="term" value="F:metalloaminopeptidase activity"/>
    <property type="evidence" value="ECO:0007669"/>
    <property type="project" value="UniProtKB-UniRule"/>
</dbReference>
<dbReference type="GO" id="GO:0006508">
    <property type="term" value="P:proteolysis"/>
    <property type="evidence" value="ECO:0007669"/>
    <property type="project" value="UniProtKB-KW"/>
</dbReference>
<dbReference type="CDD" id="cd01088">
    <property type="entry name" value="MetAP2"/>
    <property type="match status" value="1"/>
</dbReference>
<dbReference type="Gene3D" id="3.90.230.10">
    <property type="entry name" value="Creatinase/methionine aminopeptidase superfamily"/>
    <property type="match status" value="1"/>
</dbReference>
<dbReference type="Gene3D" id="1.10.10.10">
    <property type="entry name" value="Winged helix-like DNA-binding domain superfamily/Winged helix DNA-binding domain"/>
    <property type="match status" value="1"/>
</dbReference>
<dbReference type="HAMAP" id="MF_03175">
    <property type="entry name" value="MetAP_2_euk"/>
    <property type="match status" value="1"/>
</dbReference>
<dbReference type="InterPro" id="IPR036005">
    <property type="entry name" value="Creatinase/aminopeptidase-like"/>
</dbReference>
<dbReference type="InterPro" id="IPR050247">
    <property type="entry name" value="Met_Aminopeptidase_Type2"/>
</dbReference>
<dbReference type="InterPro" id="IPR000994">
    <property type="entry name" value="Pept_M24"/>
</dbReference>
<dbReference type="InterPro" id="IPR001714">
    <property type="entry name" value="Pept_M24_MAP"/>
</dbReference>
<dbReference type="InterPro" id="IPR002468">
    <property type="entry name" value="Pept_M24A_MAP2"/>
</dbReference>
<dbReference type="InterPro" id="IPR018349">
    <property type="entry name" value="Pept_M24A_MAP2_BS"/>
</dbReference>
<dbReference type="InterPro" id="IPR036388">
    <property type="entry name" value="WH-like_DNA-bd_sf"/>
</dbReference>
<dbReference type="InterPro" id="IPR036390">
    <property type="entry name" value="WH_DNA-bd_sf"/>
</dbReference>
<dbReference type="NCBIfam" id="TIGR00501">
    <property type="entry name" value="met_pdase_II"/>
    <property type="match status" value="1"/>
</dbReference>
<dbReference type="PANTHER" id="PTHR45777">
    <property type="entry name" value="METHIONINE AMINOPEPTIDASE 2"/>
    <property type="match status" value="1"/>
</dbReference>
<dbReference type="PANTHER" id="PTHR45777:SF2">
    <property type="entry name" value="METHIONINE AMINOPEPTIDASE 2"/>
    <property type="match status" value="1"/>
</dbReference>
<dbReference type="Pfam" id="PF00557">
    <property type="entry name" value="Peptidase_M24"/>
    <property type="match status" value="1"/>
</dbReference>
<dbReference type="PRINTS" id="PR00599">
    <property type="entry name" value="MAPEPTIDASE"/>
</dbReference>
<dbReference type="SUPFAM" id="SSF55920">
    <property type="entry name" value="Creatinase/aminopeptidase"/>
    <property type="match status" value="1"/>
</dbReference>
<dbReference type="SUPFAM" id="SSF46785">
    <property type="entry name" value="Winged helix' DNA-binding domain"/>
    <property type="match status" value="1"/>
</dbReference>
<dbReference type="PROSITE" id="PS01202">
    <property type="entry name" value="MAP_2"/>
    <property type="match status" value="1"/>
</dbReference>
<name>MAP2_KLULA</name>
<proteinExistence type="inferred from homology"/>
<accession>Q6CP80</accession>
<reference key="1">
    <citation type="journal article" date="2004" name="Nature">
        <title>Genome evolution in yeasts.</title>
        <authorList>
            <person name="Dujon B."/>
            <person name="Sherman D."/>
            <person name="Fischer G."/>
            <person name="Durrens P."/>
            <person name="Casaregola S."/>
            <person name="Lafontaine I."/>
            <person name="de Montigny J."/>
            <person name="Marck C."/>
            <person name="Neuveglise C."/>
            <person name="Talla E."/>
            <person name="Goffard N."/>
            <person name="Frangeul L."/>
            <person name="Aigle M."/>
            <person name="Anthouard V."/>
            <person name="Babour A."/>
            <person name="Barbe V."/>
            <person name="Barnay S."/>
            <person name="Blanchin S."/>
            <person name="Beckerich J.-M."/>
            <person name="Beyne E."/>
            <person name="Bleykasten C."/>
            <person name="Boisrame A."/>
            <person name="Boyer J."/>
            <person name="Cattolico L."/>
            <person name="Confanioleri F."/>
            <person name="de Daruvar A."/>
            <person name="Despons L."/>
            <person name="Fabre E."/>
            <person name="Fairhead C."/>
            <person name="Ferry-Dumazet H."/>
            <person name="Groppi A."/>
            <person name="Hantraye F."/>
            <person name="Hennequin C."/>
            <person name="Jauniaux N."/>
            <person name="Joyet P."/>
            <person name="Kachouri R."/>
            <person name="Kerrest A."/>
            <person name="Koszul R."/>
            <person name="Lemaire M."/>
            <person name="Lesur I."/>
            <person name="Ma L."/>
            <person name="Muller H."/>
            <person name="Nicaud J.-M."/>
            <person name="Nikolski M."/>
            <person name="Oztas S."/>
            <person name="Ozier-Kalogeropoulos O."/>
            <person name="Pellenz S."/>
            <person name="Potier S."/>
            <person name="Richard G.-F."/>
            <person name="Straub M.-L."/>
            <person name="Suleau A."/>
            <person name="Swennen D."/>
            <person name="Tekaia F."/>
            <person name="Wesolowski-Louvel M."/>
            <person name="Westhof E."/>
            <person name="Wirth B."/>
            <person name="Zeniou-Meyer M."/>
            <person name="Zivanovic Y."/>
            <person name="Bolotin-Fukuhara M."/>
            <person name="Thierry A."/>
            <person name="Bouchier C."/>
            <person name="Caudron B."/>
            <person name="Scarpelli C."/>
            <person name="Gaillardin C."/>
            <person name="Weissenbach J."/>
            <person name="Wincker P."/>
            <person name="Souciet J.-L."/>
        </authorList>
    </citation>
    <scope>NUCLEOTIDE SEQUENCE [LARGE SCALE GENOMIC DNA]</scope>
    <source>
        <strain>ATCC 8585 / CBS 2359 / DSM 70799 / NBRC 1267 / NRRL Y-1140 / WM37</strain>
    </source>
</reference>
<sequence length="418" mass="47112">MVADTDVKEIVVDALPEVSEPAAVDDSEVTEDATVQDKKKKKKKKKKKGNNMKNIALIYPDEKYPEGQWMEYHQDFNLKRVTDEERRYLERSEEYEQRCNDMRKGAEIHRRVRESVRNKIKPGMTLTEIANLVEDGTRKFTGTDANGDHVDRPKSQGIAFPTGLSLNHCAAHFTPNAGDKTVLKFEDVMKVDFGVHVNGYIIDSAFTIAFDPQYDNLLAAVKDATNTGIKEAGIDVRLTDIGEAIQEVMESYEVEINGETHQVKPCRNLCGHNINPYSIHGGKSVPIVKNGDNTKMEENEHFAIETFGSTGRGYVIQEGECSHYAKKPGSHPTPSLSSAKNLLKVIDENFGTIPFCRRYLDRLGEDKHVYALNTLVRQGIVEDYPPLNDIKGSYTAQFEHTLILHPHKKEIVSRGDDY</sequence>
<gene>
    <name evidence="1" type="primary">MAP2</name>
    <name type="ordered locus">KLLA0E06887g</name>
</gene>
<comment type="function">
    <text evidence="1">Cotranslationally removes the N-terminal methionine from nascent proteins. The N-terminal methionine is often cleaved when the second residue in the primary sequence is small and uncharged (Met-Ala-, Cys, Gly, Pro, Ser, Thr, or Val).</text>
</comment>
<comment type="catalytic activity">
    <reaction evidence="1">
        <text>Release of N-terminal amino acids, preferentially methionine, from peptides and arylamides.</text>
        <dbReference type="EC" id="3.4.11.18"/>
    </reaction>
</comment>
<comment type="cofactor">
    <cofactor evidence="1">
        <name>Co(2+)</name>
        <dbReference type="ChEBI" id="CHEBI:48828"/>
    </cofactor>
    <cofactor evidence="1">
        <name>Zn(2+)</name>
        <dbReference type="ChEBI" id="CHEBI:29105"/>
    </cofactor>
    <cofactor evidence="1">
        <name>Mn(2+)</name>
        <dbReference type="ChEBI" id="CHEBI:29035"/>
    </cofactor>
    <cofactor evidence="1">
        <name>Fe(2+)</name>
        <dbReference type="ChEBI" id="CHEBI:29033"/>
    </cofactor>
    <text evidence="1">Binds 2 divalent metal cations per subunit. Has a high-affinity and a low affinity metal-binding site. The true nature of the physiological cofactor is under debate. The enzyme is active with cobalt, zinc, manganese or divalent iron ions. Most likely, methionine aminopeptidases function as mononuclear Fe(2+)-metalloproteases under physiological conditions, and the catalytically relevant metal-binding site has been assigned to the histidine-containing high-affinity site.</text>
</comment>
<comment type="subcellular location">
    <subcellularLocation>
        <location evidence="1">Cytoplasm</location>
    </subcellularLocation>
</comment>
<comment type="similarity">
    <text evidence="1">Belongs to the peptidase M24A family. Methionine aminopeptidase eukaryotic type 2 subfamily.</text>
</comment>
<organism>
    <name type="scientific">Kluyveromyces lactis (strain ATCC 8585 / CBS 2359 / DSM 70799 / NBRC 1267 / NRRL Y-1140 / WM37)</name>
    <name type="common">Yeast</name>
    <name type="synonym">Candida sphaerica</name>
    <dbReference type="NCBI Taxonomy" id="284590"/>
    <lineage>
        <taxon>Eukaryota</taxon>
        <taxon>Fungi</taxon>
        <taxon>Dikarya</taxon>
        <taxon>Ascomycota</taxon>
        <taxon>Saccharomycotina</taxon>
        <taxon>Saccharomycetes</taxon>
        <taxon>Saccharomycetales</taxon>
        <taxon>Saccharomycetaceae</taxon>
        <taxon>Kluyveromyces</taxon>
    </lineage>
</organism>
<keyword id="KW-0031">Aminopeptidase</keyword>
<keyword id="KW-0963">Cytoplasm</keyword>
<keyword id="KW-0378">Hydrolase</keyword>
<keyword id="KW-0479">Metal-binding</keyword>
<keyword id="KW-0645">Protease</keyword>
<keyword id="KW-1185">Reference proteome</keyword>
<evidence type="ECO:0000255" key="1">
    <source>
        <dbReference type="HAMAP-Rule" id="MF_03175"/>
    </source>
</evidence>
<evidence type="ECO:0000256" key="2">
    <source>
        <dbReference type="SAM" id="MobiDB-lite"/>
    </source>
</evidence>
<protein>
    <recommendedName>
        <fullName evidence="1">Methionine aminopeptidase 2</fullName>
        <shortName evidence="1">MAP 2</shortName>
        <shortName evidence="1">MetAP 2</shortName>
        <ecNumber evidence="1">3.4.11.18</ecNumber>
    </recommendedName>
    <alternativeName>
        <fullName evidence="1">Peptidase M</fullName>
    </alternativeName>
</protein>